<feature type="chain" id="PRO_0000081300" description="Nif-specific regulatory protein">
    <location>
        <begin position="1"/>
        <end position="625"/>
    </location>
</feature>
<feature type="domain" description="GAF">
    <location>
        <begin position="29"/>
        <end position="171"/>
    </location>
</feature>
<feature type="domain" description="Sigma-54 factor interaction" evidence="3">
    <location>
        <begin position="205"/>
        <end position="433"/>
    </location>
</feature>
<feature type="DNA-binding region" description="H-T-H motif" evidence="1">
    <location>
        <begin position="597"/>
        <end position="616"/>
    </location>
</feature>
<feature type="region of interest" description="Inter-domain linker">
    <location>
        <begin position="434"/>
        <end position="582"/>
    </location>
</feature>
<feature type="region of interest" description="Disordered" evidence="4">
    <location>
        <begin position="478"/>
        <end position="578"/>
    </location>
</feature>
<feature type="region of interest" description="C-terminal DNA-binding domain">
    <location>
        <begin position="583"/>
        <end position="625"/>
    </location>
</feature>
<feature type="compositionally biased region" description="Low complexity" evidence="4">
    <location>
        <begin position="489"/>
        <end position="498"/>
    </location>
</feature>
<feature type="compositionally biased region" description="Pro residues" evidence="4">
    <location>
        <begin position="540"/>
        <end position="570"/>
    </location>
</feature>
<feature type="binding site" evidence="3">
    <location>
        <begin position="233"/>
        <end position="240"/>
    </location>
    <ligand>
        <name>ATP</name>
        <dbReference type="ChEBI" id="CHEBI:30616"/>
    </ligand>
</feature>
<feature type="binding site" evidence="3">
    <location>
        <begin position="296"/>
        <end position="305"/>
    </location>
    <ligand>
        <name>ATP</name>
        <dbReference type="ChEBI" id="CHEBI:30616"/>
    </ligand>
</feature>
<feature type="binding site" evidence="2">
    <location>
        <position position="447"/>
    </location>
    <ligand>
        <name>a divalent metal cation</name>
        <dbReference type="ChEBI" id="CHEBI:60240"/>
    </ligand>
</feature>
<feature type="binding site" evidence="2">
    <location>
        <position position="452"/>
    </location>
    <ligand>
        <name>a divalent metal cation</name>
        <dbReference type="ChEBI" id="CHEBI:60240"/>
    </ligand>
</feature>
<keyword id="KW-0010">Activator</keyword>
<keyword id="KW-0067">ATP-binding</keyword>
<keyword id="KW-0238">DNA-binding</keyword>
<keyword id="KW-0479">Metal-binding</keyword>
<keyword id="KW-0535">Nitrogen fixation</keyword>
<keyword id="KW-0547">Nucleotide-binding</keyword>
<keyword id="KW-0804">Transcription</keyword>
<keyword id="KW-0805">Transcription regulation</keyword>
<keyword id="KW-0902">Two-component regulatory system</keyword>
<organism>
    <name type="scientific">Azospirillum brasilense</name>
    <dbReference type="NCBI Taxonomy" id="192"/>
    <lineage>
        <taxon>Bacteria</taxon>
        <taxon>Pseudomonadati</taxon>
        <taxon>Pseudomonadota</taxon>
        <taxon>Alphaproteobacteria</taxon>
        <taxon>Rhodospirillales</taxon>
        <taxon>Azospirillaceae</taxon>
        <taxon>Azospirillum</taxon>
    </lineage>
</organism>
<comment type="function">
    <text>Required for activation of most nif operons, which are directly involved in nitrogen fixation.</text>
</comment>
<comment type="subunit">
    <text>Interacts with sigma-54.</text>
</comment>
<name>NIFA_AZOBR</name>
<proteinExistence type="evidence at protein level"/>
<accession>P30667</accession>
<reference key="1">
    <citation type="journal article" date="1991" name="Mol. Microbiol.">
        <title>Identification of a nifA-like regulatory gene of Azospirillum brasilense Sp7 expressed under conditions of nitrogen fixation and in the presence of air and ammonia.</title>
        <authorList>
            <person name="Liang Y.Y."/>
            <person name="Kaminski P.A."/>
            <person name="Elmerich C."/>
        </authorList>
    </citation>
    <scope>NUCLEOTIDE SEQUENCE [GENOMIC DNA]</scope>
    <source>
        <strain>ATCC 29145 / DSM 1690 / IMET 11303 / Sp7</strain>
    </source>
</reference>
<reference key="2">
    <citation type="journal article" date="1992" name="FEMS Microbiol. Lett.">
        <title>Regulation of nitrogen fixation in Azospirillum brasilense Sp7: involvement of nifA, glnA and glnB gene products.</title>
        <authorList>
            <person name="Liang Y.Y."/>
            <person name="de Zamaroczy M."/>
            <person name="Arsene F."/>
            <person name="Paquelin A."/>
            <person name="Elmerich C."/>
        </authorList>
    </citation>
    <scope>CHARACTERIZATION</scope>
</reference>
<gene>
    <name type="primary">nifA</name>
</gene>
<evidence type="ECO:0000250" key="1"/>
<evidence type="ECO:0000250" key="2">
    <source>
        <dbReference type="UniProtKB" id="P05407"/>
    </source>
</evidence>
<evidence type="ECO:0000255" key="3">
    <source>
        <dbReference type="PROSITE-ProRule" id="PRU00193"/>
    </source>
</evidence>
<evidence type="ECO:0000256" key="4">
    <source>
        <dbReference type="SAM" id="MobiDB-lite"/>
    </source>
</evidence>
<sequence length="625" mass="67855">MPGAMRQSTSNLELLTIYEVSKILGSSLDLQQTLREVLRALAYQLQMHRGRVYLVGEDNVLRLVAANGLSNEAAAQIEFRDGEGITGRILKTGMPAVVPNLAEEPLFLNRTGGREDLDEQVASLVGVPIKAAGVVVGVLTIDRISDEGPQGHFGSDVRFLTMVANLIGQTVRLHRTVAEERRFMMRETFRMQKELRPVAAPINDVVCTSPNMLEVMAQVHRVAPFKSTVLIRGESGTGKELIARAIHNMSPRKDAPFIRVNCAALPESLLESELFGHEKGAFTGAQKDHKGRFELASGGTLFLDEIGDISPNFQAKLLRVLQEQEFERVGGSKTIKTDVRLICATNLNLEEAVGHGKFRADLYFRINVVTIHLPPLRERRQDIGPLARHFVAKFAKDNGMALVMEDEALEVLNRCTWPGNVRELENCIERAATQSRDGIIRTESLSCSLNLCNSSVLFQYRTLGASVGGLAPSMGPGAINRVPPGRPGGPAAANAPKTPAMPAPVPEPAGAAAARGRPARRVVPRPLAGLRRRPAGGSGPPDPACPCPSRAPLPPQAPPPSPAAAPPPAAEVPLDEPESGSLRDRLLWAMERTGWVQAKAARLLGMTTRQVSYALRKYNIEIKRF</sequence>
<protein>
    <recommendedName>
        <fullName>Nif-specific regulatory protein</fullName>
    </recommendedName>
</protein>
<dbReference type="EMBL" id="X60714">
    <property type="protein sequence ID" value="CAA43126.1"/>
    <property type="molecule type" value="Genomic_DNA"/>
</dbReference>
<dbReference type="PIR" id="S18420">
    <property type="entry name" value="S18420"/>
</dbReference>
<dbReference type="SMR" id="P30667"/>
<dbReference type="GO" id="GO:0005524">
    <property type="term" value="F:ATP binding"/>
    <property type="evidence" value="ECO:0007669"/>
    <property type="project" value="UniProtKB-KW"/>
</dbReference>
<dbReference type="GO" id="GO:0016887">
    <property type="term" value="F:ATP hydrolysis activity"/>
    <property type="evidence" value="ECO:0007669"/>
    <property type="project" value="InterPro"/>
</dbReference>
<dbReference type="GO" id="GO:0003700">
    <property type="term" value="F:DNA-binding transcription factor activity"/>
    <property type="evidence" value="ECO:0007669"/>
    <property type="project" value="InterPro"/>
</dbReference>
<dbReference type="GO" id="GO:0046872">
    <property type="term" value="F:metal ion binding"/>
    <property type="evidence" value="ECO:0007669"/>
    <property type="project" value="UniProtKB-KW"/>
</dbReference>
<dbReference type="GO" id="GO:0043565">
    <property type="term" value="F:sequence-specific DNA binding"/>
    <property type="evidence" value="ECO:0007669"/>
    <property type="project" value="InterPro"/>
</dbReference>
<dbReference type="GO" id="GO:0009399">
    <property type="term" value="P:nitrogen fixation"/>
    <property type="evidence" value="ECO:0007669"/>
    <property type="project" value="UniProtKB-KW"/>
</dbReference>
<dbReference type="GO" id="GO:0000160">
    <property type="term" value="P:phosphorelay signal transduction system"/>
    <property type="evidence" value="ECO:0007669"/>
    <property type="project" value="UniProtKB-KW"/>
</dbReference>
<dbReference type="GO" id="GO:2000144">
    <property type="term" value="P:positive regulation of DNA-templated transcription initiation"/>
    <property type="evidence" value="ECO:0000315"/>
    <property type="project" value="CACAO"/>
</dbReference>
<dbReference type="CDD" id="cd00009">
    <property type="entry name" value="AAA"/>
    <property type="match status" value="1"/>
</dbReference>
<dbReference type="FunFam" id="1.10.10.60:FF:000765">
    <property type="match status" value="1"/>
</dbReference>
<dbReference type="FunFam" id="1.10.8.60:FF:000045">
    <property type="entry name" value="Anaerobic nitric oxide reductase transcription regulator NorR"/>
    <property type="match status" value="1"/>
</dbReference>
<dbReference type="FunFam" id="3.40.50.300:FF:000006">
    <property type="entry name" value="DNA-binding transcriptional regulator NtrC"/>
    <property type="match status" value="1"/>
</dbReference>
<dbReference type="FunFam" id="3.30.450.40:FF:000081">
    <property type="entry name" value="Vanadium nitrogenase sigma54-dependent transcriptional activator, VnfA"/>
    <property type="match status" value="1"/>
</dbReference>
<dbReference type="Gene3D" id="1.10.8.60">
    <property type="match status" value="1"/>
</dbReference>
<dbReference type="Gene3D" id="3.30.450.40">
    <property type="match status" value="1"/>
</dbReference>
<dbReference type="Gene3D" id="1.10.10.60">
    <property type="entry name" value="Homeodomain-like"/>
    <property type="match status" value="1"/>
</dbReference>
<dbReference type="Gene3D" id="3.40.50.300">
    <property type="entry name" value="P-loop containing nucleotide triphosphate hydrolases"/>
    <property type="match status" value="1"/>
</dbReference>
<dbReference type="InterPro" id="IPR003593">
    <property type="entry name" value="AAA+_ATPase"/>
</dbReference>
<dbReference type="InterPro" id="IPR003018">
    <property type="entry name" value="GAF"/>
</dbReference>
<dbReference type="InterPro" id="IPR029016">
    <property type="entry name" value="GAF-like_dom_sf"/>
</dbReference>
<dbReference type="InterPro" id="IPR002197">
    <property type="entry name" value="HTH_Fis"/>
</dbReference>
<dbReference type="InterPro" id="IPR010113">
    <property type="entry name" value="Nif-specific_regulatory_prot"/>
</dbReference>
<dbReference type="InterPro" id="IPR027417">
    <property type="entry name" value="P-loop_NTPase"/>
</dbReference>
<dbReference type="InterPro" id="IPR002078">
    <property type="entry name" value="Sigma_54_int"/>
</dbReference>
<dbReference type="InterPro" id="IPR025662">
    <property type="entry name" value="Sigma_54_int_dom_ATP-bd_1"/>
</dbReference>
<dbReference type="InterPro" id="IPR025943">
    <property type="entry name" value="Sigma_54_int_dom_ATP-bd_2"/>
</dbReference>
<dbReference type="InterPro" id="IPR025944">
    <property type="entry name" value="Sigma_54_int_dom_CS"/>
</dbReference>
<dbReference type="NCBIfam" id="TIGR01817">
    <property type="entry name" value="nifA"/>
    <property type="match status" value="1"/>
</dbReference>
<dbReference type="PANTHER" id="PTHR32071:SF117">
    <property type="entry name" value="PTS-DEPENDENT DIHYDROXYACETONE KINASE OPERON REGULATORY PROTEIN-RELATED"/>
    <property type="match status" value="1"/>
</dbReference>
<dbReference type="PANTHER" id="PTHR32071">
    <property type="entry name" value="TRANSCRIPTIONAL REGULATORY PROTEIN"/>
    <property type="match status" value="1"/>
</dbReference>
<dbReference type="Pfam" id="PF01590">
    <property type="entry name" value="GAF"/>
    <property type="match status" value="1"/>
</dbReference>
<dbReference type="Pfam" id="PF02954">
    <property type="entry name" value="HTH_8"/>
    <property type="match status" value="1"/>
</dbReference>
<dbReference type="Pfam" id="PF00158">
    <property type="entry name" value="Sigma54_activat"/>
    <property type="match status" value="1"/>
</dbReference>
<dbReference type="PRINTS" id="PR01590">
    <property type="entry name" value="HTHFIS"/>
</dbReference>
<dbReference type="SMART" id="SM00382">
    <property type="entry name" value="AAA"/>
    <property type="match status" value="1"/>
</dbReference>
<dbReference type="SMART" id="SM00065">
    <property type="entry name" value="GAF"/>
    <property type="match status" value="1"/>
</dbReference>
<dbReference type="SUPFAM" id="SSF55781">
    <property type="entry name" value="GAF domain-like"/>
    <property type="match status" value="1"/>
</dbReference>
<dbReference type="SUPFAM" id="SSF52540">
    <property type="entry name" value="P-loop containing nucleoside triphosphate hydrolases"/>
    <property type="match status" value="1"/>
</dbReference>
<dbReference type="PROSITE" id="PS00675">
    <property type="entry name" value="SIGMA54_INTERACT_1"/>
    <property type="match status" value="1"/>
</dbReference>
<dbReference type="PROSITE" id="PS00676">
    <property type="entry name" value="SIGMA54_INTERACT_2"/>
    <property type="match status" value="1"/>
</dbReference>
<dbReference type="PROSITE" id="PS00688">
    <property type="entry name" value="SIGMA54_INTERACT_3"/>
    <property type="match status" value="1"/>
</dbReference>
<dbReference type="PROSITE" id="PS50045">
    <property type="entry name" value="SIGMA54_INTERACT_4"/>
    <property type="match status" value="1"/>
</dbReference>